<gene>
    <name type="ordered locus">SCO5317</name>
    <name type="ORF">SC6G9.16</name>
</gene>
<feature type="chain" id="PRO_0000180348" description="Putative polyketide beta-ketoacyl synthase 2">
    <location>
        <begin position="1"/>
        <end position="424"/>
    </location>
</feature>
<feature type="domain" description="Ketosynthase family 3 (KS3)" evidence="1">
    <location>
        <begin position="13"/>
        <end position="416"/>
    </location>
</feature>
<accession>P23156</accession>
<protein>
    <recommendedName>
        <fullName>Putative polyketide beta-ketoacyl synthase 2</fullName>
        <ecNumber>2.3.1.-</ecNumber>
    </recommendedName>
    <alternativeName>
        <fullName>WhiE ORF IV</fullName>
    </alternativeName>
</protein>
<sequence length="424" mass="43558">MSGPQRTGTGGGSRRAVVTGLGVLSPHGTGVEAHWKAVADGTSSLGPVTREGCAHLPLRVAGEVHGFDAAETVEDRFLVQTDRFTHFALSATQHALADARFGRADVDSPYSVGVVTAAGSGGGEFGQRELQNLWGHGSRHVGPYQSIAWFYAASTGQVSIRNDFKGPCGVVAADEAGGLDALAHAALAVRNGTDTVVCGATEAPLAPYSIVCQLGYPELSRATEPDRAYRPFTEAACGFAPAEGGAVLVVEEEAAARERGADVRATVAGHAATFTGAGRWAESREGLARAIQGALAEAGCRPEEVDVVFADALGVPEADRAEALALADALGPHAARVPVTAPKTGTGRAYCAAPVLDVATAVLAMEHGLIPPTPHVLDVCHDLDLVTGRARPAEPRTALVLARGLMGSNSALVLRRGAVPPEGR</sequence>
<evidence type="ECO:0000255" key="1">
    <source>
        <dbReference type="PROSITE-ProRule" id="PRU01348"/>
    </source>
</evidence>
<evidence type="ECO:0000305" key="2"/>
<keyword id="KW-0012">Acyltransferase</keyword>
<keyword id="KW-0045">Antibiotic biosynthesis</keyword>
<keyword id="KW-1185">Reference proteome</keyword>
<keyword id="KW-0808">Transferase</keyword>
<organism>
    <name type="scientific">Streptomyces coelicolor (strain ATCC BAA-471 / A3(2) / M145)</name>
    <dbReference type="NCBI Taxonomy" id="100226"/>
    <lineage>
        <taxon>Bacteria</taxon>
        <taxon>Bacillati</taxon>
        <taxon>Actinomycetota</taxon>
        <taxon>Actinomycetes</taxon>
        <taxon>Kitasatosporales</taxon>
        <taxon>Streptomycetaceae</taxon>
        <taxon>Streptomyces</taxon>
        <taxon>Streptomyces albidoflavus group</taxon>
    </lineage>
</organism>
<comment type="function">
    <text>Involved in developmentally regulated synthesis of a compound biosynthetically related to polyketide antibiotics which is essential for spore color in Streptomyces coelicolor.</text>
</comment>
<comment type="miscellaneous">
    <text>This putative ketoacyl synthase lacks the active site cysteine.</text>
</comment>
<comment type="similarity">
    <text evidence="2">Belongs to the thiolase-like superfamily. Beta-ketoacyl-ACP synthases family.</text>
</comment>
<proteinExistence type="inferred from homology"/>
<name>KAS2_STRCO</name>
<dbReference type="EC" id="2.3.1.-"/>
<dbReference type="EMBL" id="X55942">
    <property type="protein sequence ID" value="CAA39409.1"/>
    <property type="molecule type" value="Genomic_DNA"/>
</dbReference>
<dbReference type="EMBL" id="AL939123">
    <property type="protein sequence ID" value="CAB45607.1"/>
    <property type="molecule type" value="Genomic_DNA"/>
</dbReference>
<dbReference type="PIR" id="S11975">
    <property type="entry name" value="S11975"/>
</dbReference>
<dbReference type="RefSeq" id="NP_629459.1">
    <property type="nucleotide sequence ID" value="NC_003888.3"/>
</dbReference>
<dbReference type="RefSeq" id="WP_011030171.1">
    <property type="nucleotide sequence ID" value="NZ_VNID01000040.1"/>
</dbReference>
<dbReference type="SMR" id="P23156"/>
<dbReference type="STRING" id="100226.gene:17762967"/>
<dbReference type="PaxDb" id="100226-SCO5317"/>
<dbReference type="KEGG" id="sco:SCO5317"/>
<dbReference type="PATRIC" id="fig|100226.15.peg.5403"/>
<dbReference type="eggNOG" id="COG0304">
    <property type="taxonomic scope" value="Bacteria"/>
</dbReference>
<dbReference type="HOGENOM" id="CLU_000022_69_2_11"/>
<dbReference type="InParanoid" id="P23156"/>
<dbReference type="OrthoDB" id="416758at2"/>
<dbReference type="PhylomeDB" id="P23156"/>
<dbReference type="Proteomes" id="UP000001973">
    <property type="component" value="Chromosome"/>
</dbReference>
<dbReference type="GO" id="GO:0004315">
    <property type="term" value="F:3-oxoacyl-[acyl-carrier-protein] synthase activity"/>
    <property type="evidence" value="ECO:0000318"/>
    <property type="project" value="GO_Central"/>
</dbReference>
<dbReference type="GO" id="GO:0017000">
    <property type="term" value="P:antibiotic biosynthetic process"/>
    <property type="evidence" value="ECO:0007669"/>
    <property type="project" value="UniProtKB-KW"/>
</dbReference>
<dbReference type="GO" id="GO:0006633">
    <property type="term" value="P:fatty acid biosynthetic process"/>
    <property type="evidence" value="ECO:0000318"/>
    <property type="project" value="GO_Central"/>
</dbReference>
<dbReference type="CDD" id="cd00832">
    <property type="entry name" value="CLF"/>
    <property type="match status" value="1"/>
</dbReference>
<dbReference type="FunFam" id="3.40.47.10:FF:000089">
    <property type="entry name" value="Putative polyketide beta-ketoacyl synthase 2"/>
    <property type="match status" value="1"/>
</dbReference>
<dbReference type="Gene3D" id="3.40.47.10">
    <property type="match status" value="2"/>
</dbReference>
<dbReference type="InterPro" id="IPR000794">
    <property type="entry name" value="Beta-ketoacyl_synthase"/>
</dbReference>
<dbReference type="InterPro" id="IPR014031">
    <property type="entry name" value="Ketoacyl_synth_C"/>
</dbReference>
<dbReference type="InterPro" id="IPR014030">
    <property type="entry name" value="Ketoacyl_synth_N"/>
</dbReference>
<dbReference type="InterPro" id="IPR020841">
    <property type="entry name" value="PKS_Beta-ketoAc_synthase_dom"/>
</dbReference>
<dbReference type="InterPro" id="IPR016039">
    <property type="entry name" value="Thiolase-like"/>
</dbReference>
<dbReference type="PANTHER" id="PTHR11712:SF322">
    <property type="entry name" value="POLYKETIDE BETA-KETOACYL SYNTHASE 2-RELATED"/>
    <property type="match status" value="1"/>
</dbReference>
<dbReference type="PANTHER" id="PTHR11712">
    <property type="entry name" value="POLYKETIDE SYNTHASE-RELATED"/>
    <property type="match status" value="1"/>
</dbReference>
<dbReference type="Pfam" id="PF00109">
    <property type="entry name" value="ketoacyl-synt"/>
    <property type="match status" value="1"/>
</dbReference>
<dbReference type="Pfam" id="PF02801">
    <property type="entry name" value="Ketoacyl-synt_C"/>
    <property type="match status" value="1"/>
</dbReference>
<dbReference type="SUPFAM" id="SSF53901">
    <property type="entry name" value="Thiolase-like"/>
    <property type="match status" value="2"/>
</dbReference>
<dbReference type="PROSITE" id="PS52004">
    <property type="entry name" value="KS3_2"/>
    <property type="match status" value="1"/>
</dbReference>
<reference key="1">
    <citation type="journal article" date="1990" name="Mol. Microbiol.">
        <title>Spore colour in Streptomyces coelicolor A3(2) involves the developmentally regulated synthesis of a compound biosynthetically related to polyketide antibiotics.</title>
        <authorList>
            <person name="Davis N.K."/>
            <person name="Chater K.F."/>
            <person name="Bruton C.J."/>
        </authorList>
    </citation>
    <scope>NUCLEOTIDE SEQUENCE [GENOMIC DNA]</scope>
    <source>
        <strain>A3(2) / NRRL B-16638</strain>
    </source>
</reference>
<reference key="2">
    <citation type="journal article" date="2002" name="Nature">
        <title>Complete genome sequence of the model actinomycete Streptomyces coelicolor A3(2).</title>
        <authorList>
            <person name="Bentley S.D."/>
            <person name="Chater K.F."/>
            <person name="Cerdeno-Tarraga A.-M."/>
            <person name="Challis G.L."/>
            <person name="Thomson N.R."/>
            <person name="James K.D."/>
            <person name="Harris D.E."/>
            <person name="Quail M.A."/>
            <person name="Kieser H."/>
            <person name="Harper D."/>
            <person name="Bateman A."/>
            <person name="Brown S."/>
            <person name="Chandra G."/>
            <person name="Chen C.W."/>
            <person name="Collins M."/>
            <person name="Cronin A."/>
            <person name="Fraser A."/>
            <person name="Goble A."/>
            <person name="Hidalgo J."/>
            <person name="Hornsby T."/>
            <person name="Howarth S."/>
            <person name="Huang C.-H."/>
            <person name="Kieser T."/>
            <person name="Larke L."/>
            <person name="Murphy L.D."/>
            <person name="Oliver K."/>
            <person name="O'Neil S."/>
            <person name="Rabbinowitsch E."/>
            <person name="Rajandream M.A."/>
            <person name="Rutherford K.M."/>
            <person name="Rutter S."/>
            <person name="Seeger K."/>
            <person name="Saunders D."/>
            <person name="Sharp S."/>
            <person name="Squares R."/>
            <person name="Squares S."/>
            <person name="Taylor K."/>
            <person name="Warren T."/>
            <person name="Wietzorrek A."/>
            <person name="Woodward J.R."/>
            <person name="Barrell B.G."/>
            <person name="Parkhill J."/>
            <person name="Hopwood D.A."/>
        </authorList>
    </citation>
    <scope>NUCLEOTIDE SEQUENCE [LARGE SCALE GENOMIC DNA]</scope>
    <source>
        <strain>ATCC BAA-471 / A3(2) / M145</strain>
    </source>
</reference>